<dbReference type="SMR" id="P67968"/>
<dbReference type="InParanoid" id="P67968"/>
<dbReference type="Proteomes" id="UP000001645">
    <property type="component" value="Unplaced"/>
</dbReference>
<dbReference type="GO" id="GO:0005615">
    <property type="term" value="C:extracellular space"/>
    <property type="evidence" value="ECO:0007669"/>
    <property type="project" value="TreeGrafter"/>
</dbReference>
<dbReference type="GO" id="GO:0005179">
    <property type="term" value="F:hormone activity"/>
    <property type="evidence" value="ECO:0007669"/>
    <property type="project" value="UniProtKB-KW"/>
</dbReference>
<dbReference type="GO" id="GO:0006006">
    <property type="term" value="P:glucose metabolic process"/>
    <property type="evidence" value="ECO:0007669"/>
    <property type="project" value="UniProtKB-KW"/>
</dbReference>
<dbReference type="CDD" id="cd04367">
    <property type="entry name" value="IlGF_insulin_like"/>
    <property type="match status" value="1"/>
</dbReference>
<dbReference type="Gene3D" id="1.10.100.10">
    <property type="entry name" value="Insulin-like"/>
    <property type="match status" value="1"/>
</dbReference>
<dbReference type="InterPro" id="IPR004825">
    <property type="entry name" value="Insulin"/>
</dbReference>
<dbReference type="InterPro" id="IPR016179">
    <property type="entry name" value="Insulin-like"/>
</dbReference>
<dbReference type="InterPro" id="IPR036438">
    <property type="entry name" value="Insulin-like_sf"/>
</dbReference>
<dbReference type="InterPro" id="IPR022353">
    <property type="entry name" value="Insulin_CS"/>
</dbReference>
<dbReference type="InterPro" id="IPR022352">
    <property type="entry name" value="Insulin_family"/>
</dbReference>
<dbReference type="PANTHER" id="PTHR11454:SF9">
    <property type="entry name" value="INSULIN"/>
    <property type="match status" value="1"/>
</dbReference>
<dbReference type="PANTHER" id="PTHR11454">
    <property type="entry name" value="INSULIN/INSULIN GROWTH FACTOR"/>
    <property type="match status" value="1"/>
</dbReference>
<dbReference type="Pfam" id="PF00049">
    <property type="entry name" value="Insulin"/>
    <property type="match status" value="1"/>
</dbReference>
<dbReference type="PRINTS" id="PR00277">
    <property type="entry name" value="INSULIN"/>
</dbReference>
<dbReference type="PRINTS" id="PR00276">
    <property type="entry name" value="INSULINFAMLY"/>
</dbReference>
<dbReference type="SMART" id="SM00078">
    <property type="entry name" value="IlGF"/>
    <property type="match status" value="1"/>
</dbReference>
<dbReference type="SUPFAM" id="SSF56994">
    <property type="entry name" value="Insulin-like"/>
    <property type="match status" value="1"/>
</dbReference>
<dbReference type="PROSITE" id="PS00262">
    <property type="entry name" value="INSULIN"/>
    <property type="match status" value="1"/>
</dbReference>
<evidence type="ECO:0000305" key="1"/>
<accession>P67968</accession>
<accession>P01332</accession>
<feature type="peptide" id="PRO_0000015840" description="Insulin B chain">
    <location>
        <begin position="1"/>
        <end position="30"/>
    </location>
</feature>
<feature type="peptide" id="PRO_0000015841" description="Insulin A chain">
    <location>
        <begin position="31"/>
        <end position="51"/>
    </location>
</feature>
<feature type="disulfide bond" description="Interchain (between B and A chains)">
    <location>
        <begin position="7"/>
        <end position="37"/>
    </location>
</feature>
<feature type="disulfide bond" description="Interchain (between B and A chains)">
    <location>
        <begin position="19"/>
        <end position="50"/>
    </location>
</feature>
<feature type="disulfide bond">
    <location>
        <begin position="36"/>
        <end position="41"/>
    </location>
</feature>
<feature type="non-consecutive residues" evidence="1">
    <location>
        <begin position="30"/>
        <end position="31"/>
    </location>
</feature>
<comment type="function">
    <text>Insulin decreases blood glucose concentration. It increases cell permeability to monosaccharides, amino acids and fatty acids. It accelerates glycolysis, the pentose phosphate cycle, and glycogen synthesis in liver.</text>
</comment>
<comment type="subunit">
    <text>Heterodimer of a B chain and an A chain linked by two disulfide bonds.</text>
</comment>
<comment type="subcellular location">
    <subcellularLocation>
        <location>Secreted</location>
    </subcellularLocation>
</comment>
<comment type="similarity">
    <text evidence="1">Belongs to the insulin family.</text>
</comment>
<reference key="1">
    <citation type="journal article" date="1972" name="Hoppe-Seyler's Z. Physiol. Chem.">
        <title>Structure and increased activity of insulin from the turkey (Meleagris gallopavo).</title>
        <authorList>
            <person name="Jentsch J."/>
        </authorList>
    </citation>
    <scope>PROTEIN SEQUENCE</scope>
</reference>
<gene>
    <name type="primary">INS</name>
</gene>
<sequence>AANQHLCGSHLVEALYLVCGERGFFYSPKAGIVEQCCHNTCSLYQLENYCN</sequence>
<proteinExistence type="evidence at protein level"/>
<name>INS_MELGA</name>
<organism>
    <name type="scientific">Meleagris gallopavo</name>
    <name type="common">Wild turkey</name>
    <dbReference type="NCBI Taxonomy" id="9103"/>
    <lineage>
        <taxon>Eukaryota</taxon>
        <taxon>Metazoa</taxon>
        <taxon>Chordata</taxon>
        <taxon>Craniata</taxon>
        <taxon>Vertebrata</taxon>
        <taxon>Euteleostomi</taxon>
        <taxon>Archelosauria</taxon>
        <taxon>Archosauria</taxon>
        <taxon>Dinosauria</taxon>
        <taxon>Saurischia</taxon>
        <taxon>Theropoda</taxon>
        <taxon>Coelurosauria</taxon>
        <taxon>Aves</taxon>
        <taxon>Neognathae</taxon>
        <taxon>Galloanserae</taxon>
        <taxon>Galliformes</taxon>
        <taxon>Phasianidae</taxon>
        <taxon>Meleagridinae</taxon>
        <taxon>Meleagris</taxon>
    </lineage>
</organism>
<keyword id="KW-0119">Carbohydrate metabolism</keyword>
<keyword id="KW-0903">Direct protein sequencing</keyword>
<keyword id="KW-1015">Disulfide bond</keyword>
<keyword id="KW-0313">Glucose metabolism</keyword>
<keyword id="KW-0372">Hormone</keyword>
<keyword id="KW-1185">Reference proteome</keyword>
<keyword id="KW-0964">Secreted</keyword>
<protein>
    <recommendedName>
        <fullName>Insulin</fullName>
    </recommendedName>
    <component>
        <recommendedName>
            <fullName>Insulin B chain</fullName>
        </recommendedName>
    </component>
    <component>
        <recommendedName>
            <fullName>Insulin A chain</fullName>
        </recommendedName>
    </component>
</protein>